<gene>
    <name evidence="1" type="primary">argC</name>
    <name type="ordered locus">Cphy_1948</name>
</gene>
<sequence length="346" mass="39374">MIKVGIIGSTGYAGQELVRILLQHKEVSIVWYGSKSYIDKKYSEVFQNMFQIVEESCFDDNMEELARHVDVIFTATPQGFCASVMTEDILSKVKVIDLSADYRIKDVKTYEEWYGIKHNSPDFLKEAVYGLCEFNREDIKKARLIANPGCYPTCSILSIYPLIKEGIIETDSIIIDAKSGVSGAGRGAKVDNLYCEVNENMKAYGVSTHRHTPEIEEQFSLITLENVTINFTPHLVPMNRGILITAYGKLKKRVSYEEVKEIYDRYYEKEYFVRVLEKGMPPETRWVEGSNFVDVNFVIDNRTNRIIMMGAMDNLVKGAAGQAVQNMNLMFGLPEQEGLKLVPMFP</sequence>
<proteinExistence type="inferred from homology"/>
<comment type="function">
    <text evidence="1">Catalyzes the NADPH-dependent reduction of N-acetyl-5-glutamyl phosphate to yield N-acetyl-L-glutamate 5-semialdehyde.</text>
</comment>
<comment type="catalytic activity">
    <reaction evidence="1">
        <text>N-acetyl-L-glutamate 5-semialdehyde + phosphate + NADP(+) = N-acetyl-L-glutamyl 5-phosphate + NADPH + H(+)</text>
        <dbReference type="Rhea" id="RHEA:21588"/>
        <dbReference type="ChEBI" id="CHEBI:15378"/>
        <dbReference type="ChEBI" id="CHEBI:29123"/>
        <dbReference type="ChEBI" id="CHEBI:43474"/>
        <dbReference type="ChEBI" id="CHEBI:57783"/>
        <dbReference type="ChEBI" id="CHEBI:57936"/>
        <dbReference type="ChEBI" id="CHEBI:58349"/>
        <dbReference type="EC" id="1.2.1.38"/>
    </reaction>
</comment>
<comment type="pathway">
    <text evidence="1">Amino-acid biosynthesis; L-arginine biosynthesis; N(2)-acetyl-L-ornithine from L-glutamate: step 3/4.</text>
</comment>
<comment type="subcellular location">
    <subcellularLocation>
        <location evidence="1">Cytoplasm</location>
    </subcellularLocation>
</comment>
<comment type="similarity">
    <text evidence="1">Belongs to the NAGSA dehydrogenase family. Type 1 subfamily.</text>
</comment>
<dbReference type="EC" id="1.2.1.38" evidence="1"/>
<dbReference type="EMBL" id="CP000885">
    <property type="protein sequence ID" value="ABX42316.1"/>
    <property type="molecule type" value="Genomic_DNA"/>
</dbReference>
<dbReference type="RefSeq" id="WP_012199970.1">
    <property type="nucleotide sequence ID" value="NC_010001.1"/>
</dbReference>
<dbReference type="SMR" id="A9KHN1"/>
<dbReference type="STRING" id="357809.Cphy_1948"/>
<dbReference type="KEGG" id="cpy:Cphy_1948"/>
<dbReference type="eggNOG" id="COG0002">
    <property type="taxonomic scope" value="Bacteria"/>
</dbReference>
<dbReference type="HOGENOM" id="CLU_006384_0_1_9"/>
<dbReference type="OrthoDB" id="9801289at2"/>
<dbReference type="UniPathway" id="UPA00068">
    <property type="reaction ID" value="UER00108"/>
</dbReference>
<dbReference type="Proteomes" id="UP000000370">
    <property type="component" value="Chromosome"/>
</dbReference>
<dbReference type="GO" id="GO:0005737">
    <property type="term" value="C:cytoplasm"/>
    <property type="evidence" value="ECO:0007669"/>
    <property type="project" value="UniProtKB-SubCell"/>
</dbReference>
<dbReference type="GO" id="GO:0003942">
    <property type="term" value="F:N-acetyl-gamma-glutamyl-phosphate reductase activity"/>
    <property type="evidence" value="ECO:0007669"/>
    <property type="project" value="UniProtKB-UniRule"/>
</dbReference>
<dbReference type="GO" id="GO:0051287">
    <property type="term" value="F:NAD binding"/>
    <property type="evidence" value="ECO:0007669"/>
    <property type="project" value="InterPro"/>
</dbReference>
<dbReference type="GO" id="GO:0070401">
    <property type="term" value="F:NADP+ binding"/>
    <property type="evidence" value="ECO:0007669"/>
    <property type="project" value="InterPro"/>
</dbReference>
<dbReference type="GO" id="GO:0006526">
    <property type="term" value="P:L-arginine biosynthetic process"/>
    <property type="evidence" value="ECO:0007669"/>
    <property type="project" value="UniProtKB-UniRule"/>
</dbReference>
<dbReference type="CDD" id="cd23934">
    <property type="entry name" value="AGPR_1_C"/>
    <property type="match status" value="1"/>
</dbReference>
<dbReference type="CDD" id="cd17895">
    <property type="entry name" value="AGPR_1_N"/>
    <property type="match status" value="1"/>
</dbReference>
<dbReference type="FunFam" id="3.30.360.10:FF:000014">
    <property type="entry name" value="N-acetyl-gamma-glutamyl-phosphate reductase"/>
    <property type="match status" value="1"/>
</dbReference>
<dbReference type="Gene3D" id="3.30.360.10">
    <property type="entry name" value="Dihydrodipicolinate Reductase, domain 2"/>
    <property type="match status" value="1"/>
</dbReference>
<dbReference type="Gene3D" id="3.40.50.720">
    <property type="entry name" value="NAD(P)-binding Rossmann-like Domain"/>
    <property type="match status" value="1"/>
</dbReference>
<dbReference type="HAMAP" id="MF_00150">
    <property type="entry name" value="ArgC_type1"/>
    <property type="match status" value="1"/>
</dbReference>
<dbReference type="InterPro" id="IPR023013">
    <property type="entry name" value="AGPR_AS"/>
</dbReference>
<dbReference type="InterPro" id="IPR000706">
    <property type="entry name" value="AGPR_type-1"/>
</dbReference>
<dbReference type="InterPro" id="IPR036291">
    <property type="entry name" value="NAD(P)-bd_dom_sf"/>
</dbReference>
<dbReference type="InterPro" id="IPR050085">
    <property type="entry name" value="NAGSA_dehydrogenase"/>
</dbReference>
<dbReference type="InterPro" id="IPR000534">
    <property type="entry name" value="Semialdehyde_DH_NAD-bd"/>
</dbReference>
<dbReference type="NCBIfam" id="TIGR01850">
    <property type="entry name" value="argC"/>
    <property type="match status" value="1"/>
</dbReference>
<dbReference type="PANTHER" id="PTHR32338:SF10">
    <property type="entry name" value="N-ACETYL-GAMMA-GLUTAMYL-PHOSPHATE REDUCTASE, CHLOROPLASTIC-RELATED"/>
    <property type="match status" value="1"/>
</dbReference>
<dbReference type="PANTHER" id="PTHR32338">
    <property type="entry name" value="N-ACETYL-GAMMA-GLUTAMYL-PHOSPHATE REDUCTASE, CHLOROPLASTIC-RELATED-RELATED"/>
    <property type="match status" value="1"/>
</dbReference>
<dbReference type="Pfam" id="PF01118">
    <property type="entry name" value="Semialdhyde_dh"/>
    <property type="match status" value="1"/>
</dbReference>
<dbReference type="Pfam" id="PF22698">
    <property type="entry name" value="Semialdhyde_dhC_1"/>
    <property type="match status" value="1"/>
</dbReference>
<dbReference type="SMART" id="SM00859">
    <property type="entry name" value="Semialdhyde_dh"/>
    <property type="match status" value="1"/>
</dbReference>
<dbReference type="SUPFAM" id="SSF55347">
    <property type="entry name" value="Glyceraldehyde-3-phosphate dehydrogenase-like, C-terminal domain"/>
    <property type="match status" value="1"/>
</dbReference>
<dbReference type="SUPFAM" id="SSF51735">
    <property type="entry name" value="NAD(P)-binding Rossmann-fold domains"/>
    <property type="match status" value="1"/>
</dbReference>
<dbReference type="PROSITE" id="PS01224">
    <property type="entry name" value="ARGC"/>
    <property type="match status" value="1"/>
</dbReference>
<protein>
    <recommendedName>
        <fullName evidence="1">N-acetyl-gamma-glutamyl-phosphate reductase</fullName>
        <shortName evidence="1">AGPR</shortName>
        <ecNumber evidence="1">1.2.1.38</ecNumber>
    </recommendedName>
    <alternativeName>
        <fullName evidence="1">N-acetyl-glutamate semialdehyde dehydrogenase</fullName>
        <shortName evidence="1">NAGSA dehydrogenase</shortName>
    </alternativeName>
</protein>
<keyword id="KW-0028">Amino-acid biosynthesis</keyword>
<keyword id="KW-0055">Arginine biosynthesis</keyword>
<keyword id="KW-0963">Cytoplasm</keyword>
<keyword id="KW-0521">NADP</keyword>
<keyword id="KW-0560">Oxidoreductase</keyword>
<keyword id="KW-1185">Reference proteome</keyword>
<evidence type="ECO:0000255" key="1">
    <source>
        <dbReference type="HAMAP-Rule" id="MF_00150"/>
    </source>
</evidence>
<organism>
    <name type="scientific">Lachnoclostridium phytofermentans (strain ATCC 700394 / DSM 18823 / ISDg)</name>
    <name type="common">Clostridium phytofermentans</name>
    <dbReference type="NCBI Taxonomy" id="357809"/>
    <lineage>
        <taxon>Bacteria</taxon>
        <taxon>Bacillati</taxon>
        <taxon>Bacillota</taxon>
        <taxon>Clostridia</taxon>
        <taxon>Lachnospirales</taxon>
        <taxon>Lachnospiraceae</taxon>
    </lineage>
</organism>
<name>ARGC_LACP7</name>
<accession>A9KHN1</accession>
<reference key="1">
    <citation type="submission" date="2007-11" db="EMBL/GenBank/DDBJ databases">
        <title>Complete genome sequence of Clostridium phytofermentans ISDg.</title>
        <authorList>
            <person name="Leschine S.B."/>
            <person name="Warnick T.A."/>
            <person name="Blanchard J.L."/>
            <person name="Schnell D.J."/>
            <person name="Petit E.L."/>
            <person name="LaTouf W.G."/>
            <person name="Copeland A."/>
            <person name="Lucas S."/>
            <person name="Lapidus A."/>
            <person name="Barry K."/>
            <person name="Glavina del Rio T."/>
            <person name="Dalin E."/>
            <person name="Tice H."/>
            <person name="Pitluck S."/>
            <person name="Kiss H."/>
            <person name="Brettin T."/>
            <person name="Bruce D."/>
            <person name="Detter J.C."/>
            <person name="Han C."/>
            <person name="Kuske C."/>
            <person name="Schmutz J."/>
            <person name="Larimer F."/>
            <person name="Land M."/>
            <person name="Hauser L."/>
            <person name="Kyrpides N."/>
            <person name="Kim E.A."/>
            <person name="Richardson P."/>
        </authorList>
    </citation>
    <scope>NUCLEOTIDE SEQUENCE [LARGE SCALE GENOMIC DNA]</scope>
    <source>
        <strain>ATCC 700394 / DSM 18823 / ISDg</strain>
    </source>
</reference>
<feature type="chain" id="PRO_1000076731" description="N-acetyl-gamma-glutamyl-phosphate reductase">
    <location>
        <begin position="1"/>
        <end position="346"/>
    </location>
</feature>
<feature type="active site" evidence="1">
    <location>
        <position position="150"/>
    </location>
</feature>